<feature type="chain" id="PRO_0000195060" description="Hsp90 co-chaperone Cdc37">
    <location>
        <begin position="1"/>
        <end position="393"/>
    </location>
</feature>
<feature type="region of interest" description="Disordered" evidence="2">
    <location>
        <begin position="352"/>
        <end position="393"/>
    </location>
</feature>
<feature type="compositionally biased region" description="Gly residues" evidence="2">
    <location>
        <begin position="356"/>
        <end position="368"/>
    </location>
</feature>
<feature type="compositionally biased region" description="Basic and acidic residues" evidence="2">
    <location>
        <begin position="378"/>
        <end position="393"/>
    </location>
</feature>
<accession>O57476</accession>
<keyword id="KW-0143">Chaperone</keyword>
<keyword id="KW-0963">Cytoplasm</keyword>
<keyword id="KW-1185">Reference proteome</keyword>
<name>CDC37_CHICK</name>
<evidence type="ECO:0000250" key="1"/>
<evidence type="ECO:0000256" key="2">
    <source>
        <dbReference type="SAM" id="MobiDB-lite"/>
    </source>
</evidence>
<evidence type="ECO:0000305" key="3"/>
<reference key="1">
    <citation type="journal article" date="1998" name="J. Biol. Chem.">
        <title>Organization of the chick CDC37 gene.</title>
        <authorList>
            <person name="Huang L."/>
            <person name="Grammatikakis N."/>
            <person name="Toole B.P."/>
        </authorList>
    </citation>
    <scope>NUCLEOTIDE SEQUENCE [MRNA]</scope>
</reference>
<sequence>MVDYSVWDHIEVSDDEDETHPNIDTASLFRWRHQARVERMEQFQKEKEELDKGCRECKRKLAECQKKLKELEVAEPGGGSGGGRGERERLQAEAQQLRHEERNWESKMEELRKKEKNMPWNVHTLSKDGFSKSVFNVKAEEKEETEEQKEQKHKTFVERHEKQIKHFGMLRRWDDSQKYLSDNPHLVCEETANYLVIWCIDLEVEEKQALMEQVAHQTIVMQFILELAKSLKVDPRACFRQFFTKIKTADQQYMEGFNDELEAFKERVRGRAKARIERAMREYEEEERQKRLGPGGLDPVDVYESLPPELQKCFDAKDVQMLQDTISRMDPTEAKYHMQRCIDSGLWVPNAKAAAEGGGQGGAHGQPGGADSEALYEEIPKESGEEEGGEGKA</sequence>
<protein>
    <recommendedName>
        <fullName>Hsp90 co-chaperone Cdc37</fullName>
    </recommendedName>
    <alternativeName>
        <fullName>Hsp90 chaperone protein kinase-targeting subunit</fullName>
    </alternativeName>
    <alternativeName>
        <fullName>p50Cdc37</fullName>
    </alternativeName>
</protein>
<dbReference type="EMBL" id="AF035530">
    <property type="protein sequence ID" value="AAB91998.1"/>
    <property type="molecule type" value="mRNA"/>
</dbReference>
<dbReference type="RefSeq" id="NP_990025.1">
    <property type="nucleotide sequence ID" value="NM_204694.1"/>
</dbReference>
<dbReference type="SMR" id="O57476"/>
<dbReference type="BioGRID" id="675719">
    <property type="interactions" value="1"/>
</dbReference>
<dbReference type="FunCoup" id="O57476">
    <property type="interactions" value="2581"/>
</dbReference>
<dbReference type="STRING" id="9031.ENSGALP00000072245"/>
<dbReference type="GeneID" id="395430"/>
<dbReference type="KEGG" id="gga:395430"/>
<dbReference type="CTD" id="11140"/>
<dbReference type="VEuPathDB" id="HostDB:geneid_395430"/>
<dbReference type="InParanoid" id="O57476"/>
<dbReference type="OrthoDB" id="9119171at2759"/>
<dbReference type="PhylomeDB" id="O57476"/>
<dbReference type="PRO" id="PR:O57476"/>
<dbReference type="Proteomes" id="UP000000539">
    <property type="component" value="Unassembled WGS sequence"/>
</dbReference>
<dbReference type="GO" id="GO:0005737">
    <property type="term" value="C:cytoplasm"/>
    <property type="evidence" value="ECO:0000318"/>
    <property type="project" value="GO_Central"/>
</dbReference>
<dbReference type="GO" id="GO:0031072">
    <property type="term" value="F:heat shock protein binding"/>
    <property type="evidence" value="ECO:0000318"/>
    <property type="project" value="GO_Central"/>
</dbReference>
<dbReference type="GO" id="GO:0019901">
    <property type="term" value="F:protein kinase binding"/>
    <property type="evidence" value="ECO:0007669"/>
    <property type="project" value="InterPro"/>
</dbReference>
<dbReference type="GO" id="GO:0051087">
    <property type="term" value="F:protein-folding chaperone binding"/>
    <property type="evidence" value="ECO:0000318"/>
    <property type="project" value="GO_Central"/>
</dbReference>
<dbReference type="GO" id="GO:0051082">
    <property type="term" value="F:unfolded protein binding"/>
    <property type="evidence" value="ECO:0000318"/>
    <property type="project" value="GO_Central"/>
</dbReference>
<dbReference type="GO" id="GO:0006457">
    <property type="term" value="P:protein folding"/>
    <property type="evidence" value="ECO:0000318"/>
    <property type="project" value="GO_Central"/>
</dbReference>
<dbReference type="GO" id="GO:0050821">
    <property type="term" value="P:protein stabilization"/>
    <property type="evidence" value="ECO:0000318"/>
    <property type="project" value="GO_Central"/>
</dbReference>
<dbReference type="FunFam" id="1.20.58.610:FF:000001">
    <property type="entry name" value="Hsp90 co-chaperone Cdc37-like 1"/>
    <property type="match status" value="1"/>
</dbReference>
<dbReference type="Gene3D" id="6.10.140.250">
    <property type="match status" value="1"/>
</dbReference>
<dbReference type="Gene3D" id="1.20.58.610">
    <property type="entry name" value="Cdc37, Hsp90 binding domain"/>
    <property type="match status" value="1"/>
</dbReference>
<dbReference type="InterPro" id="IPR004918">
    <property type="entry name" value="Cdc37"/>
</dbReference>
<dbReference type="InterPro" id="IPR013873">
    <property type="entry name" value="Cdc37_C"/>
</dbReference>
<dbReference type="InterPro" id="IPR013874">
    <property type="entry name" value="Cdc37_Hsp90-bd"/>
</dbReference>
<dbReference type="InterPro" id="IPR038189">
    <property type="entry name" value="Cdc37_Hsp90-bd_sf"/>
</dbReference>
<dbReference type="InterPro" id="IPR013855">
    <property type="entry name" value="Cdc37_N_dom"/>
</dbReference>
<dbReference type="PANTHER" id="PTHR12800">
    <property type="entry name" value="CDC37-RELATED"/>
    <property type="match status" value="1"/>
</dbReference>
<dbReference type="PANTHER" id="PTHR12800:SF3">
    <property type="entry name" value="HSP90 CO-CHAPERONE CDC37"/>
    <property type="match status" value="1"/>
</dbReference>
<dbReference type="Pfam" id="PF08564">
    <property type="entry name" value="CDC37_C"/>
    <property type="match status" value="1"/>
</dbReference>
<dbReference type="Pfam" id="PF08565">
    <property type="entry name" value="CDC37_M"/>
    <property type="match status" value="1"/>
</dbReference>
<dbReference type="Pfam" id="PF03234">
    <property type="entry name" value="CDC37_N"/>
    <property type="match status" value="1"/>
</dbReference>
<dbReference type="SMART" id="SM01069">
    <property type="entry name" value="CDC37_C"/>
    <property type="match status" value="1"/>
</dbReference>
<dbReference type="SMART" id="SM01070">
    <property type="entry name" value="CDC37_M"/>
    <property type="match status" value="1"/>
</dbReference>
<dbReference type="SMART" id="SM01071">
    <property type="entry name" value="CDC37_N"/>
    <property type="match status" value="1"/>
</dbReference>
<dbReference type="SUPFAM" id="SSF101391">
    <property type="entry name" value="Hsp90 co-chaperone CDC37"/>
    <property type="match status" value="1"/>
</dbReference>
<organism>
    <name type="scientific">Gallus gallus</name>
    <name type="common">Chicken</name>
    <dbReference type="NCBI Taxonomy" id="9031"/>
    <lineage>
        <taxon>Eukaryota</taxon>
        <taxon>Metazoa</taxon>
        <taxon>Chordata</taxon>
        <taxon>Craniata</taxon>
        <taxon>Vertebrata</taxon>
        <taxon>Euteleostomi</taxon>
        <taxon>Archelosauria</taxon>
        <taxon>Archosauria</taxon>
        <taxon>Dinosauria</taxon>
        <taxon>Saurischia</taxon>
        <taxon>Theropoda</taxon>
        <taxon>Coelurosauria</taxon>
        <taxon>Aves</taxon>
        <taxon>Neognathae</taxon>
        <taxon>Galloanserae</taxon>
        <taxon>Galliformes</taxon>
        <taxon>Phasianidae</taxon>
        <taxon>Phasianinae</taxon>
        <taxon>Gallus</taxon>
    </lineage>
</organism>
<comment type="function">
    <text>Co-chaperone that binds to numerous kinases and promotes their interaction with the Hsp90 complex, resulting in stabilization and promotion of their activity.</text>
</comment>
<comment type="subunit">
    <text evidence="1">Forms a complex with Hsp90.</text>
</comment>
<comment type="subcellular location">
    <subcellularLocation>
        <location evidence="1">Cytoplasm</location>
    </subcellularLocation>
</comment>
<comment type="similarity">
    <text evidence="3">Belongs to the CDC37 family.</text>
</comment>
<gene>
    <name type="primary">CDC37</name>
</gene>
<proteinExistence type="evidence at transcript level"/>